<name>RIPP1_MOUSE</name>
<evidence type="ECO:0000250" key="1"/>
<evidence type="ECO:0000250" key="2">
    <source>
        <dbReference type="UniProtKB" id="Q2WG80"/>
    </source>
</evidence>
<evidence type="ECO:0000255" key="3"/>
<evidence type="ECO:0000256" key="4">
    <source>
        <dbReference type="SAM" id="MobiDB-lite"/>
    </source>
</evidence>
<evidence type="ECO:0000269" key="5">
    <source>
    </source>
</evidence>
<evidence type="ECO:0000305" key="6"/>
<evidence type="ECO:0000312" key="7">
    <source>
        <dbReference type="EMBL" id="BAE53719.1"/>
    </source>
</evidence>
<evidence type="ECO:0000312" key="8">
    <source>
        <dbReference type="MGI" id="MGI:3614797"/>
    </source>
</evidence>
<comment type="function">
    <text evidence="2">Plays a role in somitogenesis. Essential for transcriptional repression of the segmental patterning genes, thus terminating the segmentation program in the presomitic mesoderm, and also required for the maintenance of rostrocaudal polarity in somites (By similarity).</text>
</comment>
<comment type="subcellular location">
    <subcellularLocation>
        <location evidence="2">Nucleus</location>
    </subcellularLocation>
</comment>
<comment type="tissue specificity">
    <text evidence="5">Expressed in the anterior presomitic mesoderm and somites of stage E9.5 dpc embryos. Also expressed in tongue, diaphragm and intercostal muscles at 16.5 dpc.</text>
</comment>
<comment type="domain">
    <text evidence="1">The ripply homology domain is required for transcriptional repression.</text>
</comment>
<comment type="domain">
    <text evidence="2">The WRPW motif is required for binding to TLE/GROUCHO proteins.</text>
</comment>
<comment type="similarity">
    <text evidence="6">Belongs to the ripply family.</text>
</comment>
<protein>
    <recommendedName>
        <fullName>Protein ripply1</fullName>
    </recommendedName>
</protein>
<feature type="chain" id="PRO_0000307757" description="Protein ripply1">
    <location>
        <begin position="1"/>
        <end position="201"/>
    </location>
</feature>
<feature type="region of interest" description="Disordered" evidence="4">
    <location>
        <begin position="1"/>
        <end position="29"/>
    </location>
</feature>
<feature type="region of interest" description="Ripply homology domain" evidence="3">
    <location>
        <begin position="99"/>
        <end position="134"/>
    </location>
</feature>
<feature type="region of interest" description="Disordered" evidence="4">
    <location>
        <begin position="136"/>
        <end position="201"/>
    </location>
</feature>
<feature type="short sequence motif" description="WRPW motif" evidence="3">
    <location>
        <begin position="57"/>
        <end position="60"/>
    </location>
</feature>
<feature type="compositionally biased region" description="Low complexity" evidence="4">
    <location>
        <begin position="15"/>
        <end position="29"/>
    </location>
</feature>
<feature type="compositionally biased region" description="Acidic residues" evidence="4">
    <location>
        <begin position="136"/>
        <end position="174"/>
    </location>
</feature>
<sequence>MDPAASPAAAPPAAPAAAPAADPAADPAAALPGQALAQAPALAQINGQEGARNERAAYLWRPWLSSINDQPRQARSLVDWADNRATAAEAAKTDSDFHHPVRLYWPKSHSFDYLYSAGEILLNNFPVQATINLYEDSDSADNEEDKEEEEEEEEEEDDEEEEEDEDKDVNENEPEVCMGVSEATTHKATAHSPDPHSACPN</sequence>
<organism>
    <name type="scientific">Mus musculus</name>
    <name type="common">Mouse</name>
    <dbReference type="NCBI Taxonomy" id="10090"/>
    <lineage>
        <taxon>Eukaryota</taxon>
        <taxon>Metazoa</taxon>
        <taxon>Chordata</taxon>
        <taxon>Craniata</taxon>
        <taxon>Vertebrata</taxon>
        <taxon>Euteleostomi</taxon>
        <taxon>Mammalia</taxon>
        <taxon>Eutheria</taxon>
        <taxon>Euarchontoglires</taxon>
        <taxon>Glires</taxon>
        <taxon>Rodentia</taxon>
        <taxon>Myomorpha</taxon>
        <taxon>Muroidea</taxon>
        <taxon>Muridae</taxon>
        <taxon>Murinae</taxon>
        <taxon>Mus</taxon>
        <taxon>Mus</taxon>
    </lineage>
</organism>
<proteinExistence type="evidence at transcript level"/>
<reference evidence="6 7" key="1">
    <citation type="journal article" date="2005" name="Dev. Cell">
        <title>Groucho-associated transcriptional repressor ripply1 is required for proper transition from the presomitic mesoderm to somites.</title>
        <authorList>
            <person name="Kawamura A."/>
            <person name="Koshida S."/>
            <person name="Hijikata H."/>
            <person name="Ohbayashi A."/>
            <person name="Kondoh H."/>
            <person name="Takada S."/>
        </authorList>
    </citation>
    <scope>NUCLEOTIDE SEQUENCE [MRNA]</scope>
    <scope>TISSUE SPECIFICITY</scope>
    <source>
        <tissue evidence="5">Embryo</tissue>
    </source>
</reference>
<reference key="2">
    <citation type="journal article" date="2009" name="PLoS Biol.">
        <title>Lineage-specific biology revealed by a finished genome assembly of the mouse.</title>
        <authorList>
            <person name="Church D.M."/>
            <person name="Goodstadt L."/>
            <person name="Hillier L.W."/>
            <person name="Zody M.C."/>
            <person name="Goldstein S."/>
            <person name="She X."/>
            <person name="Bult C.J."/>
            <person name="Agarwala R."/>
            <person name="Cherry J.L."/>
            <person name="DiCuccio M."/>
            <person name="Hlavina W."/>
            <person name="Kapustin Y."/>
            <person name="Meric P."/>
            <person name="Maglott D."/>
            <person name="Birtle Z."/>
            <person name="Marques A.C."/>
            <person name="Graves T."/>
            <person name="Zhou S."/>
            <person name="Teague B."/>
            <person name="Potamousis K."/>
            <person name="Churas C."/>
            <person name="Place M."/>
            <person name="Herschleb J."/>
            <person name="Runnheim R."/>
            <person name="Forrest D."/>
            <person name="Amos-Landgraf J."/>
            <person name="Schwartz D.C."/>
            <person name="Cheng Z."/>
            <person name="Lindblad-Toh K."/>
            <person name="Eichler E.E."/>
            <person name="Ponting C.P."/>
        </authorList>
    </citation>
    <scope>NUCLEOTIDE SEQUENCE [LARGE SCALE GENOMIC DNA]</scope>
    <source>
        <strain>C57BL/6J</strain>
    </source>
</reference>
<gene>
    <name evidence="8" type="primary">Ripply1</name>
</gene>
<dbReference type="EMBL" id="AB212222">
    <property type="protein sequence ID" value="BAE53719.1"/>
    <property type="molecule type" value="mRNA"/>
</dbReference>
<dbReference type="EMBL" id="AL672243">
    <property type="status" value="NOT_ANNOTATED_CDS"/>
    <property type="molecule type" value="Genomic_DNA"/>
</dbReference>
<dbReference type="CCDS" id="CCDS30436.1"/>
<dbReference type="RefSeq" id="NP_001033004.1">
    <property type="nucleotide sequence ID" value="NM_001037915.2"/>
</dbReference>
<dbReference type="FunCoup" id="Q2WG77">
    <property type="interactions" value="341"/>
</dbReference>
<dbReference type="STRING" id="10090.ENSMUSP00000098778"/>
<dbReference type="iPTMnet" id="Q2WG77"/>
<dbReference type="PhosphoSitePlus" id="Q2WG77"/>
<dbReference type="PaxDb" id="10090-ENSMUSP00000098778"/>
<dbReference type="Antibodypedia" id="63924">
    <property type="antibodies" value="11 antibodies from 7 providers"/>
</dbReference>
<dbReference type="DNASU" id="622473"/>
<dbReference type="Ensembl" id="ENSMUST00000101217.4">
    <property type="protein sequence ID" value="ENSMUSP00000098778.4"/>
    <property type="gene ID" value="ENSMUSG00000072945.4"/>
</dbReference>
<dbReference type="GeneID" id="622473"/>
<dbReference type="KEGG" id="mmu:622473"/>
<dbReference type="UCSC" id="uc009ukk.2">
    <property type="organism name" value="mouse"/>
</dbReference>
<dbReference type="AGR" id="MGI:3614797"/>
<dbReference type="CTD" id="92129"/>
<dbReference type="MGI" id="MGI:3614797">
    <property type="gene designation" value="Ripply1"/>
</dbReference>
<dbReference type="VEuPathDB" id="HostDB:ENSMUSG00000072945"/>
<dbReference type="eggNOG" id="ENOG502S6U6">
    <property type="taxonomic scope" value="Eukaryota"/>
</dbReference>
<dbReference type="GeneTree" id="ENSGT00940000161952"/>
<dbReference type="HOGENOM" id="CLU_117697_0_0_1"/>
<dbReference type="InParanoid" id="Q2WG77"/>
<dbReference type="OMA" id="NSEFHHP"/>
<dbReference type="OrthoDB" id="5978888at2759"/>
<dbReference type="PhylomeDB" id="Q2WG77"/>
<dbReference type="TreeFam" id="TF336045"/>
<dbReference type="BioGRID-ORCS" id="622473">
    <property type="hits" value="3 hits in 77 CRISPR screens"/>
</dbReference>
<dbReference type="PRO" id="PR:Q2WG77"/>
<dbReference type="Proteomes" id="UP000000589">
    <property type="component" value="Chromosome X"/>
</dbReference>
<dbReference type="RNAct" id="Q2WG77">
    <property type="molecule type" value="protein"/>
</dbReference>
<dbReference type="Bgee" id="ENSMUSG00000072945">
    <property type="expression patterns" value="Expressed in placenta and 15 other cell types or tissues"/>
</dbReference>
<dbReference type="GO" id="GO:0005634">
    <property type="term" value="C:nucleus"/>
    <property type="evidence" value="ECO:0000250"/>
    <property type="project" value="UniProtKB"/>
</dbReference>
<dbReference type="GO" id="GO:0060349">
    <property type="term" value="P:bone morphogenesis"/>
    <property type="evidence" value="ECO:0000315"/>
    <property type="project" value="MGI"/>
</dbReference>
<dbReference type="GO" id="GO:0009880">
    <property type="term" value="P:embryonic pattern specification"/>
    <property type="evidence" value="ECO:0000250"/>
    <property type="project" value="UniProtKB"/>
</dbReference>
<dbReference type="GO" id="GO:0045892">
    <property type="term" value="P:negative regulation of DNA-templated transcription"/>
    <property type="evidence" value="ECO:0000250"/>
    <property type="project" value="UniProtKB"/>
</dbReference>
<dbReference type="GO" id="GO:0007219">
    <property type="term" value="P:Notch signaling pathway"/>
    <property type="evidence" value="ECO:0000316"/>
    <property type="project" value="MGI"/>
</dbReference>
<dbReference type="GO" id="GO:0010468">
    <property type="term" value="P:regulation of gene expression"/>
    <property type="evidence" value="ECO:0000316"/>
    <property type="project" value="MGI"/>
</dbReference>
<dbReference type="GO" id="GO:0032525">
    <property type="term" value="P:somite rostral/caudal axis specification"/>
    <property type="evidence" value="ECO:0000316"/>
    <property type="project" value="MGI"/>
</dbReference>
<dbReference type="GO" id="GO:0001757">
    <property type="term" value="P:somite specification"/>
    <property type="evidence" value="ECO:0000250"/>
    <property type="project" value="UniProtKB"/>
</dbReference>
<dbReference type="InterPro" id="IPR028127">
    <property type="entry name" value="Ripply_fam"/>
</dbReference>
<dbReference type="PANTHER" id="PTHR16770">
    <property type="entry name" value="PROTEIN RIPPLY-LIKE"/>
    <property type="match status" value="1"/>
</dbReference>
<dbReference type="PANTHER" id="PTHR16770:SF5">
    <property type="entry name" value="PROTEIN RIPPLY1"/>
    <property type="match status" value="1"/>
</dbReference>
<dbReference type="Pfam" id="PF14998">
    <property type="entry name" value="Ripply"/>
    <property type="match status" value="1"/>
</dbReference>
<keyword id="KW-0217">Developmental protein</keyword>
<keyword id="KW-0539">Nucleus</keyword>
<keyword id="KW-1185">Reference proteome</keyword>
<keyword id="KW-0678">Repressor</keyword>
<keyword id="KW-0804">Transcription</keyword>
<keyword id="KW-0805">Transcription regulation</keyword>
<accession>Q2WG77</accession>